<protein>
    <recommendedName>
        <fullName evidence="1">Nucleotide-binding protein PXO_02223</fullName>
    </recommendedName>
</protein>
<dbReference type="EMBL" id="CP000967">
    <property type="protein sequence ID" value="ACD60515.1"/>
    <property type="status" value="ALT_INIT"/>
    <property type="molecule type" value="Genomic_DNA"/>
</dbReference>
<dbReference type="SMR" id="B2SJZ8"/>
<dbReference type="KEGG" id="xop:PXO_02223"/>
<dbReference type="eggNOG" id="COG1660">
    <property type="taxonomic scope" value="Bacteria"/>
</dbReference>
<dbReference type="HOGENOM" id="CLU_059558_1_1_6"/>
<dbReference type="Proteomes" id="UP000001740">
    <property type="component" value="Chromosome"/>
</dbReference>
<dbReference type="GO" id="GO:0005524">
    <property type="term" value="F:ATP binding"/>
    <property type="evidence" value="ECO:0007669"/>
    <property type="project" value="UniProtKB-UniRule"/>
</dbReference>
<dbReference type="GO" id="GO:0005525">
    <property type="term" value="F:GTP binding"/>
    <property type="evidence" value="ECO:0007669"/>
    <property type="project" value="UniProtKB-UniRule"/>
</dbReference>
<dbReference type="HAMAP" id="MF_00636">
    <property type="entry name" value="RapZ_like"/>
    <property type="match status" value="1"/>
</dbReference>
<dbReference type="InterPro" id="IPR027417">
    <property type="entry name" value="P-loop_NTPase"/>
</dbReference>
<dbReference type="InterPro" id="IPR005337">
    <property type="entry name" value="RapZ-like"/>
</dbReference>
<dbReference type="InterPro" id="IPR053930">
    <property type="entry name" value="RapZ-like_N"/>
</dbReference>
<dbReference type="InterPro" id="IPR053931">
    <property type="entry name" value="RapZ_C"/>
</dbReference>
<dbReference type="NCBIfam" id="NF003828">
    <property type="entry name" value="PRK05416.1"/>
    <property type="match status" value="1"/>
</dbReference>
<dbReference type="PANTHER" id="PTHR30448">
    <property type="entry name" value="RNASE ADAPTER PROTEIN RAPZ"/>
    <property type="match status" value="1"/>
</dbReference>
<dbReference type="PANTHER" id="PTHR30448:SF0">
    <property type="entry name" value="RNASE ADAPTER PROTEIN RAPZ"/>
    <property type="match status" value="1"/>
</dbReference>
<dbReference type="Pfam" id="PF22740">
    <property type="entry name" value="PapZ_C"/>
    <property type="match status" value="1"/>
</dbReference>
<dbReference type="Pfam" id="PF03668">
    <property type="entry name" value="RapZ-like_N"/>
    <property type="match status" value="1"/>
</dbReference>
<dbReference type="PIRSF" id="PIRSF005052">
    <property type="entry name" value="P-loopkin"/>
    <property type="match status" value="1"/>
</dbReference>
<dbReference type="SUPFAM" id="SSF52540">
    <property type="entry name" value="P-loop containing nucleoside triphosphate hydrolases"/>
    <property type="match status" value="1"/>
</dbReference>
<evidence type="ECO:0000255" key="1">
    <source>
        <dbReference type="HAMAP-Rule" id="MF_00636"/>
    </source>
</evidence>
<evidence type="ECO:0000305" key="2"/>
<reference key="1">
    <citation type="journal article" date="2008" name="BMC Genomics">
        <title>Genome sequence and rapid evolution of the rice pathogen Xanthomonas oryzae pv. oryzae PXO99A.</title>
        <authorList>
            <person name="Salzberg S.L."/>
            <person name="Sommer D.D."/>
            <person name="Schatz M.C."/>
            <person name="Phillippy A.M."/>
            <person name="Rabinowicz P.D."/>
            <person name="Tsuge S."/>
            <person name="Furutani A."/>
            <person name="Ochiai H."/>
            <person name="Delcher A.L."/>
            <person name="Kelley D."/>
            <person name="Madupu R."/>
            <person name="Puiu D."/>
            <person name="Radune D."/>
            <person name="Shumway M."/>
            <person name="Trapnell C."/>
            <person name="Aparna G."/>
            <person name="Jha G."/>
            <person name="Pandey A."/>
            <person name="Patil P.B."/>
            <person name="Ishihara H."/>
            <person name="Meyer D.F."/>
            <person name="Szurek B."/>
            <person name="Verdier V."/>
            <person name="Koebnik R."/>
            <person name="Dow J.M."/>
            <person name="Ryan R.P."/>
            <person name="Hirata H."/>
            <person name="Tsuyumu S."/>
            <person name="Won Lee S."/>
            <person name="Seo Y.-S."/>
            <person name="Sriariyanum M."/>
            <person name="Ronald P.C."/>
            <person name="Sonti R.V."/>
            <person name="Van Sluys M.-A."/>
            <person name="Leach J.E."/>
            <person name="White F.F."/>
            <person name="Bogdanove A.J."/>
        </authorList>
    </citation>
    <scope>NUCLEOTIDE SEQUENCE [LARGE SCALE GENOMIC DNA]</scope>
    <source>
        <strain>PXO99A</strain>
    </source>
</reference>
<proteinExistence type="inferred from homology"/>
<name>Y2223_XANOP</name>
<comment type="function">
    <text evidence="1">Displays ATPase and GTPase activities.</text>
</comment>
<comment type="similarity">
    <text evidence="1">Belongs to the RapZ-like family.</text>
</comment>
<comment type="sequence caution" evidence="2">
    <conflict type="erroneous initiation">
        <sequence resource="EMBL-CDS" id="ACD60515"/>
    </conflict>
</comment>
<gene>
    <name type="ordered locus">PXO_02223</name>
</gene>
<keyword id="KW-0067">ATP-binding</keyword>
<keyword id="KW-0342">GTP-binding</keyword>
<keyword id="KW-0547">Nucleotide-binding</keyword>
<feature type="chain" id="PRO_0000383305" description="Nucleotide-binding protein PXO_02223">
    <location>
        <begin position="1"/>
        <end position="282"/>
    </location>
</feature>
<feature type="binding site" evidence="1">
    <location>
        <begin position="5"/>
        <end position="12"/>
    </location>
    <ligand>
        <name>ATP</name>
        <dbReference type="ChEBI" id="CHEBI:30616"/>
    </ligand>
</feature>
<feature type="binding site" evidence="1">
    <location>
        <begin position="57"/>
        <end position="60"/>
    </location>
    <ligand>
        <name>GTP</name>
        <dbReference type="ChEBI" id="CHEBI:37565"/>
    </ligand>
</feature>
<accession>B2SJZ8</accession>
<sequence length="282" mass="32185">MIVSGLSGSGKSVALKTFEDLDYYCSDNLPVELLPDFVKSRLRGNPIGNQRLAVGIDVRSRSDLTQLAQWRLAAQEYGIEALLLFFEASDEALIKRYADTRRRHPLSHLGLALPEAITRERQLTEPLRVQADAIIDTSTLNVHQFRRRVVTEFALGSNDRLSLLFESFAYKRGVPAEADFVFDARVLPNPHWDPELRPLTGRDAGVRNYLDNEADVRRYSTQIVDLLDTWLPRLRNDTRSYVTIAFGCTGGKHRSVYMAERMARHAREQGWPEVATFHREQD</sequence>
<organism>
    <name type="scientific">Xanthomonas oryzae pv. oryzae (strain PXO99A)</name>
    <dbReference type="NCBI Taxonomy" id="360094"/>
    <lineage>
        <taxon>Bacteria</taxon>
        <taxon>Pseudomonadati</taxon>
        <taxon>Pseudomonadota</taxon>
        <taxon>Gammaproteobacteria</taxon>
        <taxon>Lysobacterales</taxon>
        <taxon>Lysobacteraceae</taxon>
        <taxon>Xanthomonas</taxon>
    </lineage>
</organism>